<comment type="catalytic activity">
    <reaction evidence="1">
        <text>sulfate + ATP + H(+) = adenosine 5'-phosphosulfate + diphosphate</text>
        <dbReference type="Rhea" id="RHEA:18133"/>
        <dbReference type="ChEBI" id="CHEBI:15378"/>
        <dbReference type="ChEBI" id="CHEBI:16189"/>
        <dbReference type="ChEBI" id="CHEBI:30616"/>
        <dbReference type="ChEBI" id="CHEBI:33019"/>
        <dbReference type="ChEBI" id="CHEBI:58243"/>
        <dbReference type="EC" id="2.7.7.4"/>
    </reaction>
</comment>
<comment type="pathway">
    <text evidence="1">Sulfur metabolism; hydrogen sulfide biosynthesis; sulfite from sulfate: step 1/3.</text>
</comment>
<comment type="similarity">
    <text evidence="1">Belongs to the sulfate adenylyltransferase family.</text>
</comment>
<reference key="1">
    <citation type="submission" date="2005-08" db="EMBL/GenBank/DDBJ databases">
        <title>Complete sequence of Chlorobium chlorochromatii CaD3.</title>
        <authorList>
            <consortium name="US DOE Joint Genome Institute"/>
            <person name="Copeland A."/>
            <person name="Lucas S."/>
            <person name="Lapidus A."/>
            <person name="Barry K."/>
            <person name="Detter J.C."/>
            <person name="Glavina T."/>
            <person name="Hammon N."/>
            <person name="Israni S."/>
            <person name="Pitluck S."/>
            <person name="Bryant D."/>
            <person name="Schmutz J."/>
            <person name="Larimer F."/>
            <person name="Land M."/>
            <person name="Kyrpides N."/>
            <person name="Ivanova N."/>
            <person name="Richardson P."/>
        </authorList>
    </citation>
    <scope>NUCLEOTIDE SEQUENCE [LARGE SCALE GENOMIC DNA]</scope>
    <source>
        <strain>CaD3</strain>
    </source>
</reference>
<organism>
    <name type="scientific">Chlorobium chlorochromatii (strain CaD3)</name>
    <dbReference type="NCBI Taxonomy" id="340177"/>
    <lineage>
        <taxon>Bacteria</taxon>
        <taxon>Pseudomonadati</taxon>
        <taxon>Chlorobiota</taxon>
        <taxon>Chlorobiia</taxon>
        <taxon>Chlorobiales</taxon>
        <taxon>Chlorobiaceae</taxon>
        <taxon>Chlorobium/Pelodictyon group</taxon>
        <taxon>Chlorobium</taxon>
    </lineage>
</organism>
<dbReference type="EC" id="2.7.7.4" evidence="1"/>
<dbReference type="EMBL" id="CP000108">
    <property type="protein sequence ID" value="ABB28842.1"/>
    <property type="molecule type" value="Genomic_DNA"/>
</dbReference>
<dbReference type="SMR" id="Q3AQ83"/>
<dbReference type="STRING" id="340177.Cag_1587"/>
<dbReference type="KEGG" id="cch:Cag_1587"/>
<dbReference type="eggNOG" id="COG2046">
    <property type="taxonomic scope" value="Bacteria"/>
</dbReference>
<dbReference type="HOGENOM" id="CLU_022950_1_1_10"/>
<dbReference type="OrthoDB" id="9804504at2"/>
<dbReference type="UniPathway" id="UPA00140">
    <property type="reaction ID" value="UER00204"/>
</dbReference>
<dbReference type="GO" id="GO:0005524">
    <property type="term" value="F:ATP binding"/>
    <property type="evidence" value="ECO:0007669"/>
    <property type="project" value="UniProtKB-KW"/>
</dbReference>
<dbReference type="GO" id="GO:0004781">
    <property type="term" value="F:sulfate adenylyltransferase (ATP) activity"/>
    <property type="evidence" value="ECO:0007669"/>
    <property type="project" value="UniProtKB-UniRule"/>
</dbReference>
<dbReference type="GO" id="GO:0070814">
    <property type="term" value="P:hydrogen sulfide biosynthetic process"/>
    <property type="evidence" value="ECO:0007669"/>
    <property type="project" value="UniProtKB-UniRule"/>
</dbReference>
<dbReference type="GO" id="GO:0000103">
    <property type="term" value="P:sulfate assimilation"/>
    <property type="evidence" value="ECO:0007669"/>
    <property type="project" value="UniProtKB-UniRule"/>
</dbReference>
<dbReference type="CDD" id="cd00517">
    <property type="entry name" value="ATPS"/>
    <property type="match status" value="1"/>
</dbReference>
<dbReference type="Gene3D" id="3.40.50.620">
    <property type="entry name" value="HUPs"/>
    <property type="match status" value="1"/>
</dbReference>
<dbReference type="Gene3D" id="3.10.400.10">
    <property type="entry name" value="Sulfate adenylyltransferase"/>
    <property type="match status" value="1"/>
</dbReference>
<dbReference type="HAMAP" id="MF_00066">
    <property type="entry name" value="Sulf_adenylyltr"/>
    <property type="match status" value="1"/>
</dbReference>
<dbReference type="InterPro" id="IPR025980">
    <property type="entry name" value="ATP-Sase_PUA-like_dom"/>
</dbReference>
<dbReference type="InterPro" id="IPR015947">
    <property type="entry name" value="PUA-like_sf"/>
</dbReference>
<dbReference type="InterPro" id="IPR014729">
    <property type="entry name" value="Rossmann-like_a/b/a_fold"/>
</dbReference>
<dbReference type="InterPro" id="IPR020792">
    <property type="entry name" value="SO4_adenylyltransferase_pro"/>
</dbReference>
<dbReference type="InterPro" id="IPR024951">
    <property type="entry name" value="Sulfurylase_cat_dom"/>
</dbReference>
<dbReference type="InterPro" id="IPR002650">
    <property type="entry name" value="Sulphate_adenylyltransferase"/>
</dbReference>
<dbReference type="NCBIfam" id="NF003166">
    <property type="entry name" value="PRK04149.1"/>
    <property type="match status" value="1"/>
</dbReference>
<dbReference type="NCBIfam" id="TIGR00339">
    <property type="entry name" value="sopT"/>
    <property type="match status" value="1"/>
</dbReference>
<dbReference type="PANTHER" id="PTHR43509">
    <property type="match status" value="1"/>
</dbReference>
<dbReference type="PANTHER" id="PTHR43509:SF1">
    <property type="entry name" value="SULFATE ADENYLYLTRANSFERASE"/>
    <property type="match status" value="1"/>
</dbReference>
<dbReference type="Pfam" id="PF01747">
    <property type="entry name" value="ATP-sulfurylase"/>
    <property type="match status" value="1"/>
</dbReference>
<dbReference type="Pfam" id="PF14306">
    <property type="entry name" value="PUA_2"/>
    <property type="match status" value="1"/>
</dbReference>
<dbReference type="SUPFAM" id="SSF52374">
    <property type="entry name" value="Nucleotidylyl transferase"/>
    <property type="match status" value="1"/>
</dbReference>
<dbReference type="SUPFAM" id="SSF88697">
    <property type="entry name" value="PUA domain-like"/>
    <property type="match status" value="1"/>
</dbReference>
<gene>
    <name evidence="1" type="primary">sat</name>
    <name type="ordered locus">Cag_1587</name>
</gene>
<evidence type="ECO:0000255" key="1">
    <source>
        <dbReference type="HAMAP-Rule" id="MF_00066"/>
    </source>
</evidence>
<name>SAT_CHLCH</name>
<proteinExistence type="inferred from homology"/>
<accession>Q3AQ83</accession>
<feature type="chain" id="PRO_0000340617" description="Sulfate adenylyltransferase">
    <location>
        <begin position="1"/>
        <end position="404"/>
    </location>
</feature>
<sequence>MSLVNPHGKEKVLKPLLLTGEELTAEKARAQSFAQVRLSSRETGDLIMLGIGGFTPLTGFMGHDDWKGSVQDCRMADGTFWPIPITLSTSKEKADELSIGQEVALVDDESGELMGSMVIEEKYSIDKAFECQEVFKTTDPEHPGVLMVMNQGDVNLAGRVKVFSEGTFPTEFAGIYMTPAETRKMFEANGWSTVAAFQTRNPMHRSHEYLVKIAIEVCDGVLIHQLLGKLKPGDIPADVRKECINALMEKYFVKGTCIQGGYPLDMRYAGPREALLHALFRQNFGCSHLIVGRDHAGVGDYYGPFDAHHIFDQIPADALETKPLKIDWTFYCYKCDGMASMKTCPHTAEDRLNLSGTKLRKMLSEGEQVPEHFSRPEVLEILQRYYASLTQKVDIKLHSHAVGK</sequence>
<keyword id="KW-0067">ATP-binding</keyword>
<keyword id="KW-0547">Nucleotide-binding</keyword>
<keyword id="KW-0548">Nucleotidyltransferase</keyword>
<keyword id="KW-0808">Transferase</keyword>
<protein>
    <recommendedName>
        <fullName evidence="1">Sulfate adenylyltransferase</fullName>
        <ecNumber evidence="1">2.7.7.4</ecNumber>
    </recommendedName>
    <alternativeName>
        <fullName evidence="1">ATP-sulfurylase</fullName>
    </alternativeName>
    <alternativeName>
        <fullName evidence="1">Sulfate adenylate transferase</fullName>
        <shortName evidence="1">SAT</shortName>
    </alternativeName>
</protein>